<keyword id="KW-0030">Aminoacyl-tRNA synthetase</keyword>
<keyword id="KW-0067">ATP-binding</keyword>
<keyword id="KW-0963">Cytoplasm</keyword>
<keyword id="KW-0436">Ligase</keyword>
<keyword id="KW-0547">Nucleotide-binding</keyword>
<keyword id="KW-0648">Protein biosynthesis</keyword>
<keyword id="KW-1185">Reference proteome</keyword>
<evidence type="ECO:0000255" key="1">
    <source>
        <dbReference type="HAMAP-Rule" id="MF_00253"/>
    </source>
</evidence>
<gene>
    <name evidence="1" type="primary">glyS</name>
    <name type="ordered locus">Mthe_0271</name>
</gene>
<sequence>MDRYEQVTELARRRGFMWPSFELYGGAAGFYDYGPLGARLKRRIEDIWRRFFVIGEGFAEIECPTIGIEEVFRASGHLSGFSDPLTECKECKEIYRADHLIKHIVEVPDALSAEEIYRMIKENDITCPECGGELSEVYEFNLMFRTAIGPGNRHPGYLRPETAQGMFINFQRLLRYYRDSLPFGAVQIGRSYRNEISPRQGVIRLREFSQAEAEVFIDPRNKQHPRFSEVKDLRLRLYSREAQERGQVEEMSVGEAVERGIIAHEILAYFVARTYEYLLAVGVDRERLRFRQHKADEMAHYAADCWDAEVLLDRLGWIEIVGIADRTDYDLRSHMALSKANLSVFVHYPEPVRRKRVAVKPDMKVLGPRFKGRAKAIADALQAMSVADLKGDTIKITVDGETYEIERRLVSVEEIEEEIRGEYVVPHVIEPSFGIDRILYTVLEHSYHEEPVEDEMRVVLRFLPGISPIDVAILPLMDKDELVEPARRIFDEFRRCGMLAEFDTSGSIGRRYRRNDEIGTPYCITVDYQTLEDGTVTVRDRDTMQQIRIEADRAVDIIRDLMSGALCFSEAGMPVKS</sequence>
<reference key="1">
    <citation type="submission" date="2006-10" db="EMBL/GenBank/DDBJ databases">
        <title>Complete sequence of Methanosaeta thermophila PT.</title>
        <authorList>
            <consortium name="US DOE Joint Genome Institute"/>
            <person name="Copeland A."/>
            <person name="Lucas S."/>
            <person name="Lapidus A."/>
            <person name="Barry K."/>
            <person name="Detter J.C."/>
            <person name="Glavina del Rio T."/>
            <person name="Hammon N."/>
            <person name="Israni S."/>
            <person name="Pitluck S."/>
            <person name="Chain P."/>
            <person name="Malfatti S."/>
            <person name="Shin M."/>
            <person name="Vergez L."/>
            <person name="Schmutz J."/>
            <person name="Larimer F."/>
            <person name="Land M."/>
            <person name="Hauser L."/>
            <person name="Kyrpides N."/>
            <person name="Kim E."/>
            <person name="Smith K.S."/>
            <person name="Ingram-Smith C."/>
            <person name="Richardson P."/>
        </authorList>
    </citation>
    <scope>NUCLEOTIDE SEQUENCE [LARGE SCALE GENOMIC DNA]</scope>
    <source>
        <strain>DSM 6194 / JCM 14653 / NBRC 101360 / PT</strain>
    </source>
</reference>
<comment type="function">
    <text evidence="1">Catalyzes the attachment of glycine to tRNA(Gly).</text>
</comment>
<comment type="catalytic activity">
    <reaction evidence="1">
        <text>tRNA(Gly) + glycine + ATP = glycyl-tRNA(Gly) + AMP + diphosphate</text>
        <dbReference type="Rhea" id="RHEA:16013"/>
        <dbReference type="Rhea" id="RHEA-COMP:9664"/>
        <dbReference type="Rhea" id="RHEA-COMP:9683"/>
        <dbReference type="ChEBI" id="CHEBI:30616"/>
        <dbReference type="ChEBI" id="CHEBI:33019"/>
        <dbReference type="ChEBI" id="CHEBI:57305"/>
        <dbReference type="ChEBI" id="CHEBI:78442"/>
        <dbReference type="ChEBI" id="CHEBI:78522"/>
        <dbReference type="ChEBI" id="CHEBI:456215"/>
        <dbReference type="EC" id="6.1.1.14"/>
    </reaction>
</comment>
<comment type="subcellular location">
    <subcellularLocation>
        <location>Cytoplasm</location>
    </subcellularLocation>
</comment>
<comment type="similarity">
    <text evidence="1">Belongs to the class-II aminoacyl-tRNA synthetase family.</text>
</comment>
<accession>A0B5U4</accession>
<name>SYG_METTP</name>
<proteinExistence type="inferred from homology"/>
<protein>
    <recommendedName>
        <fullName evidence="1">Glycine--tRNA ligase</fullName>
        <ecNumber evidence="1">6.1.1.14</ecNumber>
    </recommendedName>
    <alternativeName>
        <fullName evidence="1">Glycyl-tRNA synthetase</fullName>
        <shortName evidence="1">GlyRS</shortName>
    </alternativeName>
</protein>
<organism>
    <name type="scientific">Methanothrix thermoacetophila (strain DSM 6194 / JCM 14653 / NBRC 101360 / PT)</name>
    <name type="common">Methanosaeta thermophila</name>
    <dbReference type="NCBI Taxonomy" id="349307"/>
    <lineage>
        <taxon>Archaea</taxon>
        <taxon>Methanobacteriati</taxon>
        <taxon>Methanobacteriota</taxon>
        <taxon>Stenosarchaea group</taxon>
        <taxon>Methanomicrobia</taxon>
        <taxon>Methanotrichales</taxon>
        <taxon>Methanotrichaceae</taxon>
        <taxon>Methanothrix</taxon>
    </lineage>
</organism>
<feature type="chain" id="PRO_1000047379" description="Glycine--tRNA ligase">
    <location>
        <begin position="1"/>
        <end position="577"/>
    </location>
</feature>
<feature type="binding site" evidence="1">
    <location>
        <position position="96"/>
    </location>
    <ligand>
        <name>substrate</name>
    </ligand>
</feature>
<feature type="binding site" evidence="1">
    <location>
        <position position="161"/>
    </location>
    <ligand>
        <name>substrate</name>
    </ligand>
</feature>
<feature type="binding site" evidence="1">
    <location>
        <begin position="193"/>
        <end position="195"/>
    </location>
    <ligand>
        <name>ATP</name>
        <dbReference type="ChEBI" id="CHEBI:30616"/>
    </ligand>
</feature>
<feature type="binding site" evidence="1">
    <location>
        <begin position="203"/>
        <end position="208"/>
    </location>
    <ligand>
        <name>ATP</name>
        <dbReference type="ChEBI" id="CHEBI:30616"/>
    </ligand>
</feature>
<feature type="binding site" evidence="1">
    <location>
        <begin position="208"/>
        <end position="212"/>
    </location>
    <ligand>
        <name>substrate</name>
    </ligand>
</feature>
<feature type="binding site" evidence="1">
    <location>
        <begin position="319"/>
        <end position="320"/>
    </location>
    <ligand>
        <name>ATP</name>
        <dbReference type="ChEBI" id="CHEBI:30616"/>
    </ligand>
</feature>
<feature type="binding site" evidence="1">
    <location>
        <begin position="430"/>
        <end position="434"/>
    </location>
    <ligand>
        <name>substrate</name>
    </ligand>
</feature>
<feature type="binding site" evidence="1">
    <location>
        <begin position="434"/>
        <end position="437"/>
    </location>
    <ligand>
        <name>ATP</name>
        <dbReference type="ChEBI" id="CHEBI:30616"/>
    </ligand>
</feature>
<dbReference type="EC" id="6.1.1.14" evidence="1"/>
<dbReference type="EMBL" id="CP000477">
    <property type="protein sequence ID" value="ABK14068.1"/>
    <property type="molecule type" value="Genomic_DNA"/>
</dbReference>
<dbReference type="RefSeq" id="WP_011695467.1">
    <property type="nucleotide sequence ID" value="NC_008553.1"/>
</dbReference>
<dbReference type="SMR" id="A0B5U4"/>
<dbReference type="STRING" id="349307.Mthe_0271"/>
<dbReference type="GeneID" id="4462801"/>
<dbReference type="KEGG" id="mtp:Mthe_0271"/>
<dbReference type="HOGENOM" id="CLU_015515_1_2_2"/>
<dbReference type="OrthoDB" id="6113at2157"/>
<dbReference type="Proteomes" id="UP000000674">
    <property type="component" value="Chromosome"/>
</dbReference>
<dbReference type="GO" id="GO:0005737">
    <property type="term" value="C:cytoplasm"/>
    <property type="evidence" value="ECO:0007669"/>
    <property type="project" value="UniProtKB-SubCell"/>
</dbReference>
<dbReference type="GO" id="GO:0005524">
    <property type="term" value="F:ATP binding"/>
    <property type="evidence" value="ECO:0007669"/>
    <property type="project" value="UniProtKB-UniRule"/>
</dbReference>
<dbReference type="GO" id="GO:0004820">
    <property type="term" value="F:glycine-tRNA ligase activity"/>
    <property type="evidence" value="ECO:0000250"/>
    <property type="project" value="UniProtKB"/>
</dbReference>
<dbReference type="GO" id="GO:0046983">
    <property type="term" value="F:protein dimerization activity"/>
    <property type="evidence" value="ECO:0000250"/>
    <property type="project" value="UniProtKB"/>
</dbReference>
<dbReference type="GO" id="GO:0006426">
    <property type="term" value="P:glycyl-tRNA aminoacylation"/>
    <property type="evidence" value="ECO:0007669"/>
    <property type="project" value="UniProtKB-UniRule"/>
</dbReference>
<dbReference type="CDD" id="cd00774">
    <property type="entry name" value="GlyRS-like_core"/>
    <property type="match status" value="1"/>
</dbReference>
<dbReference type="CDD" id="cd00858">
    <property type="entry name" value="GlyRS_anticodon"/>
    <property type="match status" value="1"/>
</dbReference>
<dbReference type="FunFam" id="3.30.40.230:FF:000005">
    <property type="entry name" value="Glycine--tRNA ligase"/>
    <property type="match status" value="1"/>
</dbReference>
<dbReference type="FunFam" id="3.40.50.800:FF:000002">
    <property type="entry name" value="Glycine--tRNA ligase"/>
    <property type="match status" value="1"/>
</dbReference>
<dbReference type="FunFam" id="3.30.930.10:FF:000158">
    <property type="entry name" value="Glycyl-tRNA synthetase"/>
    <property type="match status" value="1"/>
</dbReference>
<dbReference type="FunFam" id="3.30.930.10:FF:000010">
    <property type="entry name" value="Glycyl-tRNA synthetase 1"/>
    <property type="match status" value="1"/>
</dbReference>
<dbReference type="Gene3D" id="3.30.40.230">
    <property type="match status" value="1"/>
</dbReference>
<dbReference type="Gene3D" id="3.30.720.200">
    <property type="match status" value="1"/>
</dbReference>
<dbReference type="Gene3D" id="3.40.50.800">
    <property type="entry name" value="Anticodon-binding domain"/>
    <property type="match status" value="1"/>
</dbReference>
<dbReference type="Gene3D" id="3.30.930.10">
    <property type="entry name" value="Bira Bifunctional Protein, Domain 2"/>
    <property type="match status" value="1"/>
</dbReference>
<dbReference type="HAMAP" id="MF_00253_A">
    <property type="entry name" value="Gly_tRNA_synth_A"/>
    <property type="match status" value="1"/>
</dbReference>
<dbReference type="InterPro" id="IPR002314">
    <property type="entry name" value="aa-tRNA-synt_IIb"/>
</dbReference>
<dbReference type="InterPro" id="IPR006195">
    <property type="entry name" value="aa-tRNA-synth_II"/>
</dbReference>
<dbReference type="InterPro" id="IPR045864">
    <property type="entry name" value="aa-tRNA-synth_II/BPL/LPL"/>
</dbReference>
<dbReference type="InterPro" id="IPR004154">
    <property type="entry name" value="Anticodon-bd"/>
</dbReference>
<dbReference type="InterPro" id="IPR036621">
    <property type="entry name" value="Anticodon-bd_dom_sf"/>
</dbReference>
<dbReference type="InterPro" id="IPR027031">
    <property type="entry name" value="Gly-tRNA_synthase/POLG2"/>
</dbReference>
<dbReference type="InterPro" id="IPR022960">
    <property type="entry name" value="Gly_tRNA_ligase_arc"/>
</dbReference>
<dbReference type="InterPro" id="IPR033731">
    <property type="entry name" value="GlyRS-like_core"/>
</dbReference>
<dbReference type="InterPro" id="IPR002315">
    <property type="entry name" value="tRNA-synt_gly"/>
</dbReference>
<dbReference type="NCBIfam" id="TIGR00389">
    <property type="entry name" value="glyS_dimeric"/>
    <property type="match status" value="1"/>
</dbReference>
<dbReference type="NCBIfam" id="NF003211">
    <property type="entry name" value="PRK04173.1"/>
    <property type="match status" value="1"/>
</dbReference>
<dbReference type="PANTHER" id="PTHR10745:SF0">
    <property type="entry name" value="GLYCINE--TRNA LIGASE"/>
    <property type="match status" value="1"/>
</dbReference>
<dbReference type="PANTHER" id="PTHR10745">
    <property type="entry name" value="GLYCYL-TRNA SYNTHETASE/DNA POLYMERASE SUBUNIT GAMMA-2"/>
    <property type="match status" value="1"/>
</dbReference>
<dbReference type="Pfam" id="PF03129">
    <property type="entry name" value="HGTP_anticodon"/>
    <property type="match status" value="1"/>
</dbReference>
<dbReference type="Pfam" id="PF00587">
    <property type="entry name" value="tRNA-synt_2b"/>
    <property type="match status" value="1"/>
</dbReference>
<dbReference type="PRINTS" id="PR01043">
    <property type="entry name" value="TRNASYNTHGLY"/>
</dbReference>
<dbReference type="SUPFAM" id="SSF52954">
    <property type="entry name" value="Class II aaRS ABD-related"/>
    <property type="match status" value="1"/>
</dbReference>
<dbReference type="SUPFAM" id="SSF55681">
    <property type="entry name" value="Class II aaRS and biotin synthetases"/>
    <property type="match status" value="1"/>
</dbReference>
<dbReference type="PROSITE" id="PS50862">
    <property type="entry name" value="AA_TRNA_LIGASE_II"/>
    <property type="match status" value="1"/>
</dbReference>